<accession>Q223D6</accession>
<sequence>MAQDTQTNTAVQGKIVQCIGAVVDVEFPRDQMPKIYDALKLEGSALTLEVQQQLGDGIVRTIALGSSDGLRRGLMVSNTANPIMVPVGTATLGRIMDVLGTPIDERGPVSTEKYASIHRKAPTYDELSPSQELLETGIKVIDLVCPFAKGGKVGLFGGAGVGKTVNMMELINNIAKAHSGLSVFAGVGERTREGNDFYHEMADSGVVNLENLGESKVAMVYGQMNEPPGNRLRVALTGLTIAESFRDEGKDVLFFVDNIYRFTLAGTEVSALLGRMPSAVGYQPTLAEEMGRLQERITSTKVGSITSIQAVYVPADDLTDPSPATTFAHLDSTVVLSRDIASLGIYPAVDPLDSTSRQLDPNVVGQDHYETARAVQGTLQRYKELRDIIAILGMDELAPEDKLTVARARKIQRFLSQPFHVAEVFTGSPGKYVSLAETIRGFKMIVAGECDHLPEQAFYMVGTIDEAFEKAKKI</sequence>
<proteinExistence type="inferred from homology"/>
<evidence type="ECO:0000255" key="1">
    <source>
        <dbReference type="HAMAP-Rule" id="MF_01347"/>
    </source>
</evidence>
<dbReference type="EC" id="7.1.2.2" evidence="1"/>
<dbReference type="EMBL" id="CP000267">
    <property type="protein sequence ID" value="ABD67867.1"/>
    <property type="molecule type" value="Genomic_DNA"/>
</dbReference>
<dbReference type="RefSeq" id="WP_011462440.1">
    <property type="nucleotide sequence ID" value="NC_007908.1"/>
</dbReference>
<dbReference type="SMR" id="Q223D6"/>
<dbReference type="STRING" id="338969.Rfer_0106"/>
<dbReference type="KEGG" id="rfr:Rfer_0106"/>
<dbReference type="eggNOG" id="COG0055">
    <property type="taxonomic scope" value="Bacteria"/>
</dbReference>
<dbReference type="HOGENOM" id="CLU_022398_0_2_4"/>
<dbReference type="OrthoDB" id="9801639at2"/>
<dbReference type="Proteomes" id="UP000008332">
    <property type="component" value="Chromosome"/>
</dbReference>
<dbReference type="GO" id="GO:0005886">
    <property type="term" value="C:plasma membrane"/>
    <property type="evidence" value="ECO:0007669"/>
    <property type="project" value="UniProtKB-SubCell"/>
</dbReference>
<dbReference type="GO" id="GO:0045259">
    <property type="term" value="C:proton-transporting ATP synthase complex"/>
    <property type="evidence" value="ECO:0007669"/>
    <property type="project" value="UniProtKB-KW"/>
</dbReference>
<dbReference type="GO" id="GO:0005524">
    <property type="term" value="F:ATP binding"/>
    <property type="evidence" value="ECO:0007669"/>
    <property type="project" value="UniProtKB-UniRule"/>
</dbReference>
<dbReference type="GO" id="GO:0016887">
    <property type="term" value="F:ATP hydrolysis activity"/>
    <property type="evidence" value="ECO:0007669"/>
    <property type="project" value="InterPro"/>
</dbReference>
<dbReference type="GO" id="GO:0046933">
    <property type="term" value="F:proton-transporting ATP synthase activity, rotational mechanism"/>
    <property type="evidence" value="ECO:0007669"/>
    <property type="project" value="UniProtKB-UniRule"/>
</dbReference>
<dbReference type="CDD" id="cd18110">
    <property type="entry name" value="ATP-synt_F1_beta_C"/>
    <property type="match status" value="1"/>
</dbReference>
<dbReference type="CDD" id="cd18115">
    <property type="entry name" value="ATP-synt_F1_beta_N"/>
    <property type="match status" value="1"/>
</dbReference>
<dbReference type="CDD" id="cd01133">
    <property type="entry name" value="F1-ATPase_beta_CD"/>
    <property type="match status" value="1"/>
</dbReference>
<dbReference type="FunFam" id="1.10.1140.10:FF:000001">
    <property type="entry name" value="ATP synthase subunit beta"/>
    <property type="match status" value="1"/>
</dbReference>
<dbReference type="FunFam" id="3.40.50.300:FF:000004">
    <property type="entry name" value="ATP synthase subunit beta"/>
    <property type="match status" value="1"/>
</dbReference>
<dbReference type="Gene3D" id="2.40.10.170">
    <property type="match status" value="1"/>
</dbReference>
<dbReference type="Gene3D" id="1.10.1140.10">
    <property type="entry name" value="Bovine Mitochondrial F1-atpase, Atp Synthase Beta Chain, Chain D, domain 3"/>
    <property type="match status" value="1"/>
</dbReference>
<dbReference type="Gene3D" id="3.40.50.300">
    <property type="entry name" value="P-loop containing nucleotide triphosphate hydrolases"/>
    <property type="match status" value="1"/>
</dbReference>
<dbReference type="HAMAP" id="MF_01347">
    <property type="entry name" value="ATP_synth_beta_bact"/>
    <property type="match status" value="1"/>
</dbReference>
<dbReference type="InterPro" id="IPR003593">
    <property type="entry name" value="AAA+_ATPase"/>
</dbReference>
<dbReference type="InterPro" id="IPR055190">
    <property type="entry name" value="ATP-synt_VA_C"/>
</dbReference>
<dbReference type="InterPro" id="IPR005722">
    <property type="entry name" value="ATP_synth_F1_bsu"/>
</dbReference>
<dbReference type="InterPro" id="IPR020003">
    <property type="entry name" value="ATPase_a/bsu_AS"/>
</dbReference>
<dbReference type="InterPro" id="IPR050053">
    <property type="entry name" value="ATPase_alpha/beta_chains"/>
</dbReference>
<dbReference type="InterPro" id="IPR004100">
    <property type="entry name" value="ATPase_F1/V1/A1_a/bsu_N"/>
</dbReference>
<dbReference type="InterPro" id="IPR036121">
    <property type="entry name" value="ATPase_F1/V1/A1_a/bsu_N_sf"/>
</dbReference>
<dbReference type="InterPro" id="IPR000194">
    <property type="entry name" value="ATPase_F1/V1/A1_a/bsu_nucl-bd"/>
</dbReference>
<dbReference type="InterPro" id="IPR024034">
    <property type="entry name" value="ATPase_F1/V1_b/a_C"/>
</dbReference>
<dbReference type="InterPro" id="IPR027417">
    <property type="entry name" value="P-loop_NTPase"/>
</dbReference>
<dbReference type="NCBIfam" id="TIGR01039">
    <property type="entry name" value="atpD"/>
    <property type="match status" value="1"/>
</dbReference>
<dbReference type="PANTHER" id="PTHR15184">
    <property type="entry name" value="ATP SYNTHASE"/>
    <property type="match status" value="1"/>
</dbReference>
<dbReference type="PANTHER" id="PTHR15184:SF71">
    <property type="entry name" value="ATP SYNTHASE SUBUNIT BETA, MITOCHONDRIAL"/>
    <property type="match status" value="1"/>
</dbReference>
<dbReference type="Pfam" id="PF00006">
    <property type="entry name" value="ATP-synt_ab"/>
    <property type="match status" value="1"/>
</dbReference>
<dbReference type="Pfam" id="PF02874">
    <property type="entry name" value="ATP-synt_ab_N"/>
    <property type="match status" value="1"/>
</dbReference>
<dbReference type="Pfam" id="PF22919">
    <property type="entry name" value="ATP-synt_VA_C"/>
    <property type="match status" value="1"/>
</dbReference>
<dbReference type="SMART" id="SM00382">
    <property type="entry name" value="AAA"/>
    <property type="match status" value="1"/>
</dbReference>
<dbReference type="SUPFAM" id="SSF47917">
    <property type="entry name" value="C-terminal domain of alpha and beta subunits of F1 ATP synthase"/>
    <property type="match status" value="1"/>
</dbReference>
<dbReference type="SUPFAM" id="SSF50615">
    <property type="entry name" value="N-terminal domain of alpha and beta subunits of F1 ATP synthase"/>
    <property type="match status" value="1"/>
</dbReference>
<dbReference type="SUPFAM" id="SSF52540">
    <property type="entry name" value="P-loop containing nucleoside triphosphate hydrolases"/>
    <property type="match status" value="1"/>
</dbReference>
<dbReference type="PROSITE" id="PS00152">
    <property type="entry name" value="ATPASE_ALPHA_BETA"/>
    <property type="match status" value="1"/>
</dbReference>
<organism>
    <name type="scientific">Albidiferax ferrireducens (strain ATCC BAA-621 / DSM 15236 / T118)</name>
    <name type="common">Rhodoferax ferrireducens</name>
    <dbReference type="NCBI Taxonomy" id="338969"/>
    <lineage>
        <taxon>Bacteria</taxon>
        <taxon>Pseudomonadati</taxon>
        <taxon>Pseudomonadota</taxon>
        <taxon>Betaproteobacteria</taxon>
        <taxon>Burkholderiales</taxon>
        <taxon>Comamonadaceae</taxon>
        <taxon>Rhodoferax</taxon>
    </lineage>
</organism>
<keyword id="KW-0066">ATP synthesis</keyword>
<keyword id="KW-0067">ATP-binding</keyword>
<keyword id="KW-0997">Cell inner membrane</keyword>
<keyword id="KW-1003">Cell membrane</keyword>
<keyword id="KW-0139">CF(1)</keyword>
<keyword id="KW-0375">Hydrogen ion transport</keyword>
<keyword id="KW-0406">Ion transport</keyword>
<keyword id="KW-0472">Membrane</keyword>
<keyword id="KW-0547">Nucleotide-binding</keyword>
<keyword id="KW-1185">Reference proteome</keyword>
<keyword id="KW-1278">Translocase</keyword>
<keyword id="KW-0813">Transport</keyword>
<protein>
    <recommendedName>
        <fullName evidence="1">ATP synthase subunit beta 1</fullName>
        <ecNumber evidence="1">7.1.2.2</ecNumber>
    </recommendedName>
    <alternativeName>
        <fullName evidence="1">ATP synthase F1 sector subunit beta 1</fullName>
    </alternativeName>
    <alternativeName>
        <fullName evidence="1">F-ATPase subunit beta 1</fullName>
    </alternativeName>
</protein>
<gene>
    <name evidence="1" type="primary">atpD1</name>
    <name type="ordered locus">Rfer_0106</name>
</gene>
<reference key="1">
    <citation type="submission" date="2006-02" db="EMBL/GenBank/DDBJ databases">
        <title>Complete sequence of chromosome of Rhodoferax ferrireducens DSM 15236.</title>
        <authorList>
            <person name="Copeland A."/>
            <person name="Lucas S."/>
            <person name="Lapidus A."/>
            <person name="Barry K."/>
            <person name="Detter J.C."/>
            <person name="Glavina del Rio T."/>
            <person name="Hammon N."/>
            <person name="Israni S."/>
            <person name="Pitluck S."/>
            <person name="Brettin T."/>
            <person name="Bruce D."/>
            <person name="Han C."/>
            <person name="Tapia R."/>
            <person name="Gilna P."/>
            <person name="Kiss H."/>
            <person name="Schmutz J."/>
            <person name="Larimer F."/>
            <person name="Land M."/>
            <person name="Kyrpides N."/>
            <person name="Ivanova N."/>
            <person name="Richardson P."/>
        </authorList>
    </citation>
    <scope>NUCLEOTIDE SEQUENCE [LARGE SCALE GENOMIC DNA]</scope>
    <source>
        <strain>ATCC BAA-621 / DSM 15236 / T118</strain>
    </source>
</reference>
<comment type="function">
    <text evidence="1">Produces ATP from ADP in the presence of a proton gradient across the membrane. The catalytic sites are hosted primarily by the beta subunits.</text>
</comment>
<comment type="catalytic activity">
    <reaction evidence="1">
        <text>ATP + H2O + 4 H(+)(in) = ADP + phosphate + 5 H(+)(out)</text>
        <dbReference type="Rhea" id="RHEA:57720"/>
        <dbReference type="ChEBI" id="CHEBI:15377"/>
        <dbReference type="ChEBI" id="CHEBI:15378"/>
        <dbReference type="ChEBI" id="CHEBI:30616"/>
        <dbReference type="ChEBI" id="CHEBI:43474"/>
        <dbReference type="ChEBI" id="CHEBI:456216"/>
        <dbReference type="EC" id="7.1.2.2"/>
    </reaction>
</comment>
<comment type="subunit">
    <text evidence="1">F-type ATPases have 2 components, CF(1) - the catalytic core - and CF(0) - the membrane proton channel. CF(1) has five subunits: alpha(3), beta(3), gamma(1), delta(1), epsilon(1). CF(0) has three main subunits: a(1), b(2) and c(9-12). The alpha and beta chains form an alternating ring which encloses part of the gamma chain. CF(1) is attached to CF(0) by a central stalk formed by the gamma and epsilon chains, while a peripheral stalk is formed by the delta and b chains.</text>
</comment>
<comment type="subcellular location">
    <subcellularLocation>
        <location evidence="1">Cell inner membrane</location>
        <topology evidence="1">Peripheral membrane protein</topology>
    </subcellularLocation>
</comment>
<comment type="similarity">
    <text evidence="1">Belongs to the ATPase alpha/beta chains family.</text>
</comment>
<name>ATPB1_ALBFT</name>
<feature type="chain" id="PRO_0000254356" description="ATP synthase subunit beta 1">
    <location>
        <begin position="1"/>
        <end position="474"/>
    </location>
</feature>
<feature type="binding site" evidence="1">
    <location>
        <begin position="157"/>
        <end position="164"/>
    </location>
    <ligand>
        <name>ATP</name>
        <dbReference type="ChEBI" id="CHEBI:30616"/>
    </ligand>
</feature>